<protein>
    <recommendedName>
        <fullName>Putative inactive 6-phospho-alpha-glucosidase</fullName>
    </recommendedName>
</protein>
<keyword id="KW-0464">Manganese</keyword>
<keyword id="KW-0479">Metal-binding</keyword>
<keyword id="KW-0520">NAD</keyword>
<keyword id="KW-1185">Reference proteome</keyword>
<comment type="miscellaneous">
    <text evidence="4">The GlvG polypeptide of 212 residues cross-reacts with antibodies prepared against the full-length 6-phospho-alpha-D-glucosidase (MalH) from Fusobacterium mortiferum. This operon may be cryptic in wild-type K12 strains (Probable).</text>
</comment>
<comment type="similarity">
    <text evidence="3">Belongs to the glycosyl hydrolase 4 family.</text>
</comment>
<comment type="caution">
    <text evidence="5">Could be the product of a pseudogene. Lacks the C-terminal half of the catalytic domain found in other members of this family. This truncated polypeptide does not display phospho-alpha- or phospho-beta-glucosidase activity (PubMed:9209025).</text>
</comment>
<reference key="1">
    <citation type="journal article" date="1993" name="Genomics">
        <title>DNA sequence and analysis of 136 kilobases of the Escherichia coli genome: organizational symmetry around the origin of replication.</title>
        <authorList>
            <person name="Burland V.D."/>
            <person name="Plunkett G. III"/>
            <person name="Daniels D.L."/>
            <person name="Blattner F.R."/>
        </authorList>
    </citation>
    <scope>NUCLEOTIDE SEQUENCE [LARGE SCALE GENOMIC DNA]</scope>
    <source>
        <strain>K12 / MG1655 / ATCC 47076</strain>
    </source>
</reference>
<reference key="2">
    <citation type="journal article" date="1997" name="Science">
        <title>The complete genome sequence of Escherichia coli K-12.</title>
        <authorList>
            <person name="Blattner F.R."/>
            <person name="Plunkett G. III"/>
            <person name="Bloch C.A."/>
            <person name="Perna N.T."/>
            <person name="Burland V."/>
            <person name="Riley M."/>
            <person name="Collado-Vides J."/>
            <person name="Glasner J.D."/>
            <person name="Rode C.K."/>
            <person name="Mayhew G.F."/>
            <person name="Gregor J."/>
            <person name="Davis N.W."/>
            <person name="Kirkpatrick H.A."/>
            <person name="Goeden M.A."/>
            <person name="Rose D.J."/>
            <person name="Mau B."/>
            <person name="Shao Y."/>
        </authorList>
    </citation>
    <scope>NUCLEOTIDE SEQUENCE [LARGE SCALE GENOMIC DNA]</scope>
    <source>
        <strain>K12 / MG1655 / ATCC 47076</strain>
    </source>
</reference>
<reference key="3">
    <citation type="journal article" date="1994" name="Protein Sci.">
        <title>Novel phosphotransferase system genes revealed by bacterial genome analysis: unique, putative fructose- and glucoside-specific systems.</title>
        <authorList>
            <person name="Reizer J."/>
            <person name="Michotey V."/>
            <person name="Reizer A."/>
            <person name="Saier M.H. Jr."/>
        </authorList>
    </citation>
    <scope>DISCUSSION OF SEQUENCE</scope>
</reference>
<reference key="4">
    <citation type="journal article" date="1997" name="J. Bacteriol.">
        <title>6-phospho-alpha-D-glucosidase from Fusobacterium mortiferum: cloning, expression, and assignment to family 4 of the glycosylhydrolases.</title>
        <authorList>
            <person name="Bouma C.L."/>
            <person name="Reizer J."/>
            <person name="Reizer A."/>
            <person name="Robrish S.A."/>
            <person name="Thompson J."/>
        </authorList>
    </citation>
    <scope>LACK OF GLUCOSIDASE ACTIVITY</scope>
    <scope>CROSS-REACTIVITY</scope>
    <source>
        <strain>K12 / MG1655 / ATCC 47076</strain>
    </source>
</reference>
<organism>
    <name type="scientific">Escherichia coli (strain K12)</name>
    <dbReference type="NCBI Taxonomy" id="83333"/>
    <lineage>
        <taxon>Bacteria</taxon>
        <taxon>Pseudomonadati</taxon>
        <taxon>Pseudomonadota</taxon>
        <taxon>Gammaproteobacteria</taxon>
        <taxon>Enterobacterales</taxon>
        <taxon>Enterobacteriaceae</taxon>
        <taxon>Escherichia</taxon>
    </lineage>
</organism>
<evidence type="ECO:0000250" key="1"/>
<evidence type="ECO:0000303" key="2">
    <source>
    </source>
</evidence>
<evidence type="ECO:0000305" key="3"/>
<evidence type="ECO:0000305" key="4">
    <source>
    </source>
</evidence>
<evidence type="ECO:0000305" key="5">
    <source>
    </source>
</evidence>
<sequence>MTKFSVVVAGGGSTFTPGIVLMLLANQDRFPLRALKFYDNDGARQEVIAEACKVILKEKAPDIAFSYTTDPEVAFSDVDFVMAHIRVGKYPMRELDEKIPLRHGVVGQETCGPGGIAYGMRSIGGVLELVDYMEKYSPNAWMLNYSNPAAIVAEATRRLRPNAKILNICDMPIGIESRMAQIVGLQDRKQMRVRYYGLNHWWSAISRSFRKG</sequence>
<feature type="chain" id="PRO_0000169860" description="Putative inactive 6-phospho-alpha-glucosidase">
    <location>
        <begin position="1"/>
        <end position="212"/>
    </location>
</feature>
<feature type="binding site" evidence="1">
    <location>
        <begin position="4"/>
        <end position="70"/>
    </location>
    <ligand>
        <name>NAD(+)</name>
        <dbReference type="ChEBI" id="CHEBI:57540"/>
    </ligand>
</feature>
<feature type="binding site" evidence="1">
    <location>
        <position position="169"/>
    </location>
    <ligand>
        <name>Mn(2+)</name>
        <dbReference type="ChEBI" id="CHEBI:29035"/>
    </ligand>
</feature>
<feature type="binding site" evidence="1">
    <location>
        <position position="200"/>
    </location>
    <ligand>
        <name>Mn(2+)</name>
        <dbReference type="ChEBI" id="CHEBI:29035"/>
    </ligand>
</feature>
<proteinExistence type="uncertain"/>
<dbReference type="EMBL" id="L10328">
    <property type="protein sequence ID" value="AAA62033.1"/>
    <property type="molecule type" value="Genomic_DNA"/>
</dbReference>
<dbReference type="EMBL" id="U00096">
    <property type="protein sequence ID" value="AYC08251.1"/>
    <property type="molecule type" value="Genomic_DNA"/>
</dbReference>
<dbReference type="PIR" id="B65170">
    <property type="entry name" value="B65170"/>
</dbReference>
<dbReference type="SMR" id="P31450"/>
<dbReference type="DIP" id="DIP-9813N"/>
<dbReference type="FunCoup" id="P31450">
    <property type="interactions" value="436"/>
</dbReference>
<dbReference type="IntAct" id="P31450">
    <property type="interactions" value="7"/>
</dbReference>
<dbReference type="CAZy" id="GH4">
    <property type="family name" value="Glycoside Hydrolase Family 4"/>
</dbReference>
<dbReference type="EnsemblBacteria" id="AYC08251">
    <property type="protein sequence ID" value="AYC08251"/>
    <property type="gene ID" value="b3681"/>
</dbReference>
<dbReference type="KEGG" id="ecoc:C3026_19960"/>
<dbReference type="PATRIC" id="fig|83333.103.peg.4616"/>
<dbReference type="EchoBASE" id="EB1659"/>
<dbReference type="InParanoid" id="P31450"/>
<dbReference type="PhylomeDB" id="P31450"/>
<dbReference type="Proteomes" id="UP000000625">
    <property type="component" value="Chromosome"/>
</dbReference>
<dbReference type="GO" id="GO:0004553">
    <property type="term" value="F:hydrolase activity, hydrolyzing O-glycosyl compounds"/>
    <property type="evidence" value="ECO:0007669"/>
    <property type="project" value="InterPro"/>
</dbReference>
<dbReference type="GO" id="GO:0046872">
    <property type="term" value="F:metal ion binding"/>
    <property type="evidence" value="ECO:0007669"/>
    <property type="project" value="UniProtKB-KW"/>
</dbReference>
<dbReference type="GO" id="GO:0016616">
    <property type="term" value="F:oxidoreductase activity, acting on the CH-OH group of donors, NAD or NADP as acceptor"/>
    <property type="evidence" value="ECO:0007669"/>
    <property type="project" value="InterPro"/>
</dbReference>
<dbReference type="GO" id="GO:0005975">
    <property type="term" value="P:carbohydrate metabolic process"/>
    <property type="evidence" value="ECO:0007669"/>
    <property type="project" value="InterPro"/>
</dbReference>
<dbReference type="FunFam" id="3.40.50.720:FF:000295">
    <property type="entry name" value="6-phospho-alpha-glucosidase"/>
    <property type="match status" value="1"/>
</dbReference>
<dbReference type="Gene3D" id="3.90.1820.10">
    <property type="entry name" value="AglA-like glucosidase"/>
    <property type="match status" value="1"/>
</dbReference>
<dbReference type="InterPro" id="IPR053715">
    <property type="entry name" value="GH4_Enzyme_sf"/>
</dbReference>
<dbReference type="InterPro" id="IPR019802">
    <property type="entry name" value="GlycHydrolase_4_CS"/>
</dbReference>
<dbReference type="InterPro" id="IPR001088">
    <property type="entry name" value="Glyco_hydro_4"/>
</dbReference>
<dbReference type="InterPro" id="IPR015955">
    <property type="entry name" value="Lactate_DH/Glyco_Ohase_4_C"/>
</dbReference>
<dbReference type="InterPro" id="IPR036291">
    <property type="entry name" value="NAD(P)-bd_dom_sf"/>
</dbReference>
<dbReference type="PANTHER" id="PTHR32092">
    <property type="entry name" value="6-PHOSPHO-BETA-GLUCOSIDASE-RELATED"/>
    <property type="match status" value="1"/>
</dbReference>
<dbReference type="PANTHER" id="PTHR32092:SF14">
    <property type="entry name" value="MALTOSE-6'-PHOSPHATE GLUCOSIDASE"/>
    <property type="match status" value="1"/>
</dbReference>
<dbReference type="Pfam" id="PF02056">
    <property type="entry name" value="Glyco_hydro_4"/>
    <property type="match status" value="1"/>
</dbReference>
<dbReference type="PRINTS" id="PR00732">
    <property type="entry name" value="GLHYDRLASE4"/>
</dbReference>
<dbReference type="SUPFAM" id="SSF56327">
    <property type="entry name" value="LDH C-terminal domain-like"/>
    <property type="match status" value="1"/>
</dbReference>
<dbReference type="SUPFAM" id="SSF51735">
    <property type="entry name" value="NAD(P)-binding Rossmann-fold domains"/>
    <property type="match status" value="1"/>
</dbReference>
<dbReference type="PROSITE" id="PS01324">
    <property type="entry name" value="GLYCOSYL_HYDROL_F4"/>
    <property type="match status" value="1"/>
</dbReference>
<name>GLVG_ECOLI</name>
<gene>
    <name evidence="2" type="primary">glvG</name>
    <name type="ordered locus">b4556</name>
    <name type="ORF">b3681</name>
</gene>
<accession>P31450</accession>
<accession>A0A385XMQ3</accession>